<evidence type="ECO:0000255" key="1">
    <source>
        <dbReference type="HAMAP-Rule" id="MF_01333"/>
    </source>
</evidence>
<evidence type="ECO:0000305" key="2"/>
<dbReference type="EMBL" id="CP001034">
    <property type="protein sequence ID" value="ACB83805.1"/>
    <property type="molecule type" value="Genomic_DNA"/>
</dbReference>
<dbReference type="RefSeq" id="WP_012446694.1">
    <property type="nucleotide sequence ID" value="NC_010718.1"/>
</dbReference>
<dbReference type="SMR" id="B2A4F1"/>
<dbReference type="FunCoup" id="B2A4F1">
    <property type="interactions" value="418"/>
</dbReference>
<dbReference type="STRING" id="457570.Nther_0206"/>
<dbReference type="KEGG" id="nth:Nther_0206"/>
<dbReference type="eggNOG" id="COG0094">
    <property type="taxonomic scope" value="Bacteria"/>
</dbReference>
<dbReference type="HOGENOM" id="CLU_061015_2_1_9"/>
<dbReference type="InParanoid" id="B2A4F1"/>
<dbReference type="OrthoDB" id="9806626at2"/>
<dbReference type="Proteomes" id="UP000001683">
    <property type="component" value="Chromosome"/>
</dbReference>
<dbReference type="GO" id="GO:1990904">
    <property type="term" value="C:ribonucleoprotein complex"/>
    <property type="evidence" value="ECO:0007669"/>
    <property type="project" value="UniProtKB-KW"/>
</dbReference>
<dbReference type="GO" id="GO:0005840">
    <property type="term" value="C:ribosome"/>
    <property type="evidence" value="ECO:0007669"/>
    <property type="project" value="UniProtKB-KW"/>
</dbReference>
<dbReference type="GO" id="GO:0019843">
    <property type="term" value="F:rRNA binding"/>
    <property type="evidence" value="ECO:0007669"/>
    <property type="project" value="UniProtKB-UniRule"/>
</dbReference>
<dbReference type="GO" id="GO:0003735">
    <property type="term" value="F:structural constituent of ribosome"/>
    <property type="evidence" value="ECO:0007669"/>
    <property type="project" value="InterPro"/>
</dbReference>
<dbReference type="GO" id="GO:0000049">
    <property type="term" value="F:tRNA binding"/>
    <property type="evidence" value="ECO:0007669"/>
    <property type="project" value="UniProtKB-UniRule"/>
</dbReference>
<dbReference type="GO" id="GO:0006412">
    <property type="term" value="P:translation"/>
    <property type="evidence" value="ECO:0007669"/>
    <property type="project" value="UniProtKB-UniRule"/>
</dbReference>
<dbReference type="FunFam" id="3.30.1440.10:FF:000001">
    <property type="entry name" value="50S ribosomal protein L5"/>
    <property type="match status" value="1"/>
</dbReference>
<dbReference type="Gene3D" id="3.30.1440.10">
    <property type="match status" value="1"/>
</dbReference>
<dbReference type="HAMAP" id="MF_01333_B">
    <property type="entry name" value="Ribosomal_uL5_B"/>
    <property type="match status" value="1"/>
</dbReference>
<dbReference type="InterPro" id="IPR002132">
    <property type="entry name" value="Ribosomal_uL5"/>
</dbReference>
<dbReference type="InterPro" id="IPR020930">
    <property type="entry name" value="Ribosomal_uL5_bac-type"/>
</dbReference>
<dbReference type="InterPro" id="IPR031309">
    <property type="entry name" value="Ribosomal_uL5_C"/>
</dbReference>
<dbReference type="InterPro" id="IPR020929">
    <property type="entry name" value="Ribosomal_uL5_CS"/>
</dbReference>
<dbReference type="InterPro" id="IPR022803">
    <property type="entry name" value="Ribosomal_uL5_dom_sf"/>
</dbReference>
<dbReference type="InterPro" id="IPR031310">
    <property type="entry name" value="Ribosomal_uL5_N"/>
</dbReference>
<dbReference type="NCBIfam" id="NF000585">
    <property type="entry name" value="PRK00010.1"/>
    <property type="match status" value="1"/>
</dbReference>
<dbReference type="PANTHER" id="PTHR11994">
    <property type="entry name" value="60S RIBOSOMAL PROTEIN L11-RELATED"/>
    <property type="match status" value="1"/>
</dbReference>
<dbReference type="Pfam" id="PF00281">
    <property type="entry name" value="Ribosomal_L5"/>
    <property type="match status" value="1"/>
</dbReference>
<dbReference type="Pfam" id="PF00673">
    <property type="entry name" value="Ribosomal_L5_C"/>
    <property type="match status" value="1"/>
</dbReference>
<dbReference type="PIRSF" id="PIRSF002161">
    <property type="entry name" value="Ribosomal_L5"/>
    <property type="match status" value="1"/>
</dbReference>
<dbReference type="SUPFAM" id="SSF55282">
    <property type="entry name" value="RL5-like"/>
    <property type="match status" value="1"/>
</dbReference>
<dbReference type="PROSITE" id="PS00358">
    <property type="entry name" value="RIBOSOMAL_L5"/>
    <property type="match status" value="1"/>
</dbReference>
<name>RL5_NATTJ</name>
<accession>B2A4F1</accession>
<gene>
    <name evidence="1" type="primary">rplE</name>
    <name type="ordered locus">Nther_0206</name>
</gene>
<reference key="1">
    <citation type="submission" date="2008-04" db="EMBL/GenBank/DDBJ databases">
        <title>Complete sequence of chromosome of Natranaerobius thermophilus JW/NM-WN-LF.</title>
        <authorList>
            <consortium name="US DOE Joint Genome Institute"/>
            <person name="Copeland A."/>
            <person name="Lucas S."/>
            <person name="Lapidus A."/>
            <person name="Glavina del Rio T."/>
            <person name="Dalin E."/>
            <person name="Tice H."/>
            <person name="Bruce D."/>
            <person name="Goodwin L."/>
            <person name="Pitluck S."/>
            <person name="Chertkov O."/>
            <person name="Brettin T."/>
            <person name="Detter J.C."/>
            <person name="Han C."/>
            <person name="Kuske C.R."/>
            <person name="Schmutz J."/>
            <person name="Larimer F."/>
            <person name="Land M."/>
            <person name="Hauser L."/>
            <person name="Kyrpides N."/>
            <person name="Lykidis A."/>
            <person name="Mesbah N.M."/>
            <person name="Wiegel J."/>
        </authorList>
    </citation>
    <scope>NUCLEOTIDE SEQUENCE [LARGE SCALE GENOMIC DNA]</scope>
    <source>
        <strain>ATCC BAA-1301 / DSM 18059 / JW/NM-WN-LF</strain>
    </source>
</reference>
<protein>
    <recommendedName>
        <fullName evidence="1">Large ribosomal subunit protein uL5</fullName>
    </recommendedName>
    <alternativeName>
        <fullName evidence="2">50S ribosomal protein L5</fullName>
    </alternativeName>
</protein>
<comment type="function">
    <text evidence="1">This is one of the proteins that bind and probably mediate the attachment of the 5S RNA into the large ribosomal subunit, where it forms part of the central protuberance. In the 70S ribosome it contacts protein S13 of the 30S subunit (bridge B1b), connecting the 2 subunits; this bridge is implicated in subunit movement. Contacts the P site tRNA; the 5S rRNA and some of its associated proteins might help stabilize positioning of ribosome-bound tRNAs.</text>
</comment>
<comment type="subunit">
    <text evidence="1">Part of the 50S ribosomal subunit; part of the 5S rRNA/L5/L18/L25 subcomplex. Contacts the 5S rRNA and the P site tRNA. Forms a bridge to the 30S subunit in the 70S ribosome.</text>
</comment>
<comment type="similarity">
    <text evidence="1">Belongs to the universal ribosomal protein uL5 family.</text>
</comment>
<feature type="chain" id="PRO_1000142425" description="Large ribosomal subunit protein uL5">
    <location>
        <begin position="1"/>
        <end position="179"/>
    </location>
</feature>
<proteinExistence type="inferred from homology"/>
<sequence length="179" mass="20224">MARLLEHYRGEVKPKLKDEMGYKNIMEVPKLEKVVVNMGIGDAKDNPKILDNAVENLEQVTGQKPVVTKAKRSIANFKVRQGMPVGCKVTLRGERMYHFLDKLINVALPRVRDFKGVSPKAFDGRGNYSLGLKEQMVFPELEYDDIERVQGMDIIIATTAETDEEAKKLLERLGMPFSG</sequence>
<keyword id="KW-1185">Reference proteome</keyword>
<keyword id="KW-0687">Ribonucleoprotein</keyword>
<keyword id="KW-0689">Ribosomal protein</keyword>
<keyword id="KW-0694">RNA-binding</keyword>
<keyword id="KW-0699">rRNA-binding</keyword>
<keyword id="KW-0820">tRNA-binding</keyword>
<organism>
    <name type="scientific">Natranaerobius thermophilus (strain ATCC BAA-1301 / DSM 18059 / JW/NM-WN-LF)</name>
    <dbReference type="NCBI Taxonomy" id="457570"/>
    <lineage>
        <taxon>Bacteria</taxon>
        <taxon>Bacillati</taxon>
        <taxon>Bacillota</taxon>
        <taxon>Clostridia</taxon>
        <taxon>Natranaerobiales</taxon>
        <taxon>Natranaerobiaceae</taxon>
        <taxon>Natranaerobius</taxon>
    </lineage>
</organism>